<sequence length="201" mass="21622">MAQINVIGKNGGRTIDLELPEVNAAILHDVVTWQLASRRRGTASTKTRAQVSKSGKKMYSQKGTGNARHGDRGVPTFVGGGVAFGPKPRSYGYTLPRKVRQLGLAMALADRQDGGKLIAVDGFDLDGKTKSFVSWAAQNGLDGSERVLIVTDDAQTRQSARNVAWATVLPVAGLNAYDILRHDRLVIDAVALEPAQEEVEQ</sequence>
<dbReference type="EMBL" id="CP001114">
    <property type="protein sequence ID" value="ACO46882.1"/>
    <property type="molecule type" value="Genomic_DNA"/>
</dbReference>
<dbReference type="RefSeq" id="WP_012694004.1">
    <property type="nucleotide sequence ID" value="NC_012526.1"/>
</dbReference>
<dbReference type="SMR" id="C1CXG5"/>
<dbReference type="STRING" id="546414.Deide_18940"/>
<dbReference type="PaxDb" id="546414-Deide_18940"/>
<dbReference type="KEGG" id="ddr:Deide_18940"/>
<dbReference type="eggNOG" id="COG0088">
    <property type="taxonomic scope" value="Bacteria"/>
</dbReference>
<dbReference type="HOGENOM" id="CLU_041575_5_1_0"/>
<dbReference type="OrthoDB" id="9803201at2"/>
<dbReference type="Proteomes" id="UP000002208">
    <property type="component" value="Chromosome"/>
</dbReference>
<dbReference type="GO" id="GO:1990904">
    <property type="term" value="C:ribonucleoprotein complex"/>
    <property type="evidence" value="ECO:0007669"/>
    <property type="project" value="UniProtKB-KW"/>
</dbReference>
<dbReference type="GO" id="GO:0005840">
    <property type="term" value="C:ribosome"/>
    <property type="evidence" value="ECO:0007669"/>
    <property type="project" value="UniProtKB-KW"/>
</dbReference>
<dbReference type="GO" id="GO:0019843">
    <property type="term" value="F:rRNA binding"/>
    <property type="evidence" value="ECO:0007669"/>
    <property type="project" value="UniProtKB-UniRule"/>
</dbReference>
<dbReference type="GO" id="GO:0003735">
    <property type="term" value="F:structural constituent of ribosome"/>
    <property type="evidence" value="ECO:0007669"/>
    <property type="project" value="InterPro"/>
</dbReference>
<dbReference type="GO" id="GO:0006412">
    <property type="term" value="P:translation"/>
    <property type="evidence" value="ECO:0007669"/>
    <property type="project" value="UniProtKB-UniRule"/>
</dbReference>
<dbReference type="Gene3D" id="3.40.1370.10">
    <property type="match status" value="1"/>
</dbReference>
<dbReference type="HAMAP" id="MF_01328_B">
    <property type="entry name" value="Ribosomal_uL4_B"/>
    <property type="match status" value="1"/>
</dbReference>
<dbReference type="InterPro" id="IPR002136">
    <property type="entry name" value="Ribosomal_uL4"/>
</dbReference>
<dbReference type="InterPro" id="IPR013005">
    <property type="entry name" value="Ribosomal_uL4-like"/>
</dbReference>
<dbReference type="InterPro" id="IPR023574">
    <property type="entry name" value="Ribosomal_uL4_dom_sf"/>
</dbReference>
<dbReference type="NCBIfam" id="TIGR03953">
    <property type="entry name" value="rplD_bact"/>
    <property type="match status" value="1"/>
</dbReference>
<dbReference type="PANTHER" id="PTHR10746">
    <property type="entry name" value="50S RIBOSOMAL PROTEIN L4"/>
    <property type="match status" value="1"/>
</dbReference>
<dbReference type="PANTHER" id="PTHR10746:SF6">
    <property type="entry name" value="LARGE RIBOSOMAL SUBUNIT PROTEIN UL4M"/>
    <property type="match status" value="1"/>
</dbReference>
<dbReference type="Pfam" id="PF00573">
    <property type="entry name" value="Ribosomal_L4"/>
    <property type="match status" value="1"/>
</dbReference>
<dbReference type="SUPFAM" id="SSF52166">
    <property type="entry name" value="Ribosomal protein L4"/>
    <property type="match status" value="1"/>
</dbReference>
<protein>
    <recommendedName>
        <fullName evidence="1">Large ribosomal subunit protein uL4</fullName>
    </recommendedName>
    <alternativeName>
        <fullName evidence="3">50S ribosomal protein L4</fullName>
    </alternativeName>
</protein>
<feature type="chain" id="PRO_1000214565" description="Large ribosomal subunit protein uL4">
    <location>
        <begin position="1"/>
        <end position="201"/>
    </location>
</feature>
<feature type="region of interest" description="Disordered" evidence="2">
    <location>
        <begin position="39"/>
        <end position="72"/>
    </location>
</feature>
<feature type="compositionally biased region" description="Polar residues" evidence="2">
    <location>
        <begin position="42"/>
        <end position="53"/>
    </location>
</feature>
<reference key="1">
    <citation type="journal article" date="2009" name="PLoS Genet.">
        <title>Alliance of proteomics and genomics to unravel the specificities of Sahara bacterium Deinococcus deserti.</title>
        <authorList>
            <person name="de Groot A."/>
            <person name="Dulermo R."/>
            <person name="Ortet P."/>
            <person name="Blanchard L."/>
            <person name="Guerin P."/>
            <person name="Fernandez B."/>
            <person name="Vacherie B."/>
            <person name="Dossat C."/>
            <person name="Jolivet E."/>
            <person name="Siguier P."/>
            <person name="Chandler M."/>
            <person name="Barakat M."/>
            <person name="Dedieu A."/>
            <person name="Barbe V."/>
            <person name="Heulin T."/>
            <person name="Sommer S."/>
            <person name="Achouak W."/>
            <person name="Armengaud J."/>
        </authorList>
    </citation>
    <scope>NUCLEOTIDE SEQUENCE [LARGE SCALE GENOMIC DNA]</scope>
    <source>
        <strain>DSM 17065 / CIP 109153 / LMG 22923 / VCD115</strain>
    </source>
</reference>
<name>RL4_DEIDV</name>
<proteinExistence type="inferred from homology"/>
<keyword id="KW-1185">Reference proteome</keyword>
<keyword id="KW-0687">Ribonucleoprotein</keyword>
<keyword id="KW-0689">Ribosomal protein</keyword>
<keyword id="KW-0694">RNA-binding</keyword>
<keyword id="KW-0699">rRNA-binding</keyword>
<gene>
    <name evidence="1" type="primary">rplD</name>
    <name type="ordered locus">Deide_18940</name>
</gene>
<accession>C1CXG5</accession>
<comment type="function">
    <text evidence="1">One of the primary rRNA binding proteins, this protein initially binds near the 5'-end of the 23S rRNA. It is important during the early stages of 50S assembly. It makes multiple contacts with different domains of the 23S rRNA in the assembled 50S subunit and ribosome.</text>
</comment>
<comment type="function">
    <text evidence="1">Forms part of the polypeptide exit tunnel.</text>
</comment>
<comment type="subunit">
    <text evidence="1">Part of the 50S ribosomal subunit.</text>
</comment>
<comment type="similarity">
    <text evidence="1">Belongs to the universal ribosomal protein uL4 family.</text>
</comment>
<organism>
    <name type="scientific">Deinococcus deserti (strain DSM 17065 / CIP 109153 / LMG 22923 / VCD115)</name>
    <dbReference type="NCBI Taxonomy" id="546414"/>
    <lineage>
        <taxon>Bacteria</taxon>
        <taxon>Thermotogati</taxon>
        <taxon>Deinococcota</taxon>
        <taxon>Deinococci</taxon>
        <taxon>Deinococcales</taxon>
        <taxon>Deinococcaceae</taxon>
        <taxon>Deinococcus</taxon>
    </lineage>
</organism>
<evidence type="ECO:0000255" key="1">
    <source>
        <dbReference type="HAMAP-Rule" id="MF_01328"/>
    </source>
</evidence>
<evidence type="ECO:0000256" key="2">
    <source>
        <dbReference type="SAM" id="MobiDB-lite"/>
    </source>
</evidence>
<evidence type="ECO:0000305" key="3"/>